<sequence length="433" mass="46640">MTCDKEKTRGIRPGDIAVVVGTGRSGVAAARLLHAKGARVRVLERDAANVPATFAEWAAGAGVEIVCGAHDAAHFADAAVVVPSPGVAVATLRPYLPATGGPEVMAEMELAWRELSGEPVIAVTGTSGKTTTVSLCAHMLRTQGLSVFLGGNIGTPLCEYVLEGKRADVLVIEISSFQLQTCSTFRPRVAMLLNITANHLDYHADMQEYIDAKFRLFRCQDEDDLAVFGEGLAPLVDRYGVKARRVTFRATDRFAESRLFGAHNRANAEAAWTAAREFGVTLENALQAVATFAPMPHRLEQVAERGGVLYVNDSKCTTVSALRVALEAFDRPVLLLAGGKFKGGDLEGLIPLVRERVRAVMLFGASREVFEAAWRDVVPMTWDATLEEAVRRAASAARQGEVVLMAPATASFDLFRNYGHRGDVFRAAVESLA</sequence>
<comment type="function">
    <text evidence="1">Cell wall formation. Catalyzes the addition of glutamate to the nucleotide precursor UDP-N-acetylmuramoyl-L-alanine (UMA).</text>
</comment>
<comment type="catalytic activity">
    <reaction evidence="1">
        <text>UDP-N-acetyl-alpha-D-muramoyl-L-alanine + D-glutamate + ATP = UDP-N-acetyl-alpha-D-muramoyl-L-alanyl-D-glutamate + ADP + phosphate + H(+)</text>
        <dbReference type="Rhea" id="RHEA:16429"/>
        <dbReference type="ChEBI" id="CHEBI:15378"/>
        <dbReference type="ChEBI" id="CHEBI:29986"/>
        <dbReference type="ChEBI" id="CHEBI:30616"/>
        <dbReference type="ChEBI" id="CHEBI:43474"/>
        <dbReference type="ChEBI" id="CHEBI:83898"/>
        <dbReference type="ChEBI" id="CHEBI:83900"/>
        <dbReference type="ChEBI" id="CHEBI:456216"/>
        <dbReference type="EC" id="6.3.2.9"/>
    </reaction>
</comment>
<comment type="pathway">
    <text evidence="1">Cell wall biogenesis; peptidoglycan biosynthesis.</text>
</comment>
<comment type="subcellular location">
    <subcellularLocation>
        <location evidence="1">Cytoplasm</location>
    </subcellularLocation>
</comment>
<comment type="similarity">
    <text evidence="1">Belongs to the MurCDEF family.</text>
</comment>
<protein>
    <recommendedName>
        <fullName evidence="1">UDP-N-acetylmuramoylalanine--D-glutamate ligase</fullName>
        <ecNumber evidence="1">6.3.2.9</ecNumber>
    </recommendedName>
    <alternativeName>
        <fullName evidence="1">D-glutamic acid-adding enzyme</fullName>
    </alternativeName>
    <alternativeName>
        <fullName evidence="1">UDP-N-acetylmuramoyl-L-alanyl-D-glutamate synthetase</fullName>
    </alternativeName>
</protein>
<proteinExistence type="inferred from homology"/>
<accession>Q728U6</accession>
<keyword id="KW-0067">ATP-binding</keyword>
<keyword id="KW-0131">Cell cycle</keyword>
<keyword id="KW-0132">Cell division</keyword>
<keyword id="KW-0133">Cell shape</keyword>
<keyword id="KW-0961">Cell wall biogenesis/degradation</keyword>
<keyword id="KW-0963">Cytoplasm</keyword>
<keyword id="KW-0436">Ligase</keyword>
<keyword id="KW-0547">Nucleotide-binding</keyword>
<keyword id="KW-0573">Peptidoglycan synthesis</keyword>
<keyword id="KW-1185">Reference proteome</keyword>
<name>MURD_NITV2</name>
<gene>
    <name evidence="1" type="primary">murD</name>
    <name type="ordered locus">DVU_2506</name>
</gene>
<feature type="chain" id="PRO_0000109009" description="UDP-N-acetylmuramoylalanine--D-glutamate ligase">
    <location>
        <begin position="1"/>
        <end position="433"/>
    </location>
</feature>
<feature type="binding site" evidence="1">
    <location>
        <begin position="125"/>
        <end position="131"/>
    </location>
    <ligand>
        <name>ATP</name>
        <dbReference type="ChEBI" id="CHEBI:30616"/>
    </ligand>
</feature>
<organism>
    <name type="scientific">Nitratidesulfovibrio vulgaris (strain ATCC 29579 / DSM 644 / CCUG 34227 / NCIMB 8303 / VKM B-1760 / Hildenborough)</name>
    <name type="common">Desulfovibrio vulgaris</name>
    <dbReference type="NCBI Taxonomy" id="882"/>
    <lineage>
        <taxon>Bacteria</taxon>
        <taxon>Pseudomonadati</taxon>
        <taxon>Thermodesulfobacteriota</taxon>
        <taxon>Desulfovibrionia</taxon>
        <taxon>Desulfovibrionales</taxon>
        <taxon>Desulfovibrionaceae</taxon>
        <taxon>Nitratidesulfovibrio</taxon>
    </lineage>
</organism>
<evidence type="ECO:0000255" key="1">
    <source>
        <dbReference type="HAMAP-Rule" id="MF_00639"/>
    </source>
</evidence>
<reference key="1">
    <citation type="journal article" date="2004" name="Nat. Biotechnol.">
        <title>The genome sequence of the anaerobic, sulfate-reducing bacterium Desulfovibrio vulgaris Hildenborough.</title>
        <authorList>
            <person name="Heidelberg J.F."/>
            <person name="Seshadri R."/>
            <person name="Haveman S.A."/>
            <person name="Hemme C.L."/>
            <person name="Paulsen I.T."/>
            <person name="Kolonay J.F."/>
            <person name="Eisen J.A."/>
            <person name="Ward N.L."/>
            <person name="Methe B.A."/>
            <person name="Brinkac L.M."/>
            <person name="Daugherty S.C."/>
            <person name="DeBoy R.T."/>
            <person name="Dodson R.J."/>
            <person name="Durkin A.S."/>
            <person name="Madupu R."/>
            <person name="Nelson W.C."/>
            <person name="Sullivan S.A."/>
            <person name="Fouts D.E."/>
            <person name="Haft D.H."/>
            <person name="Selengut J."/>
            <person name="Peterson J.D."/>
            <person name="Davidsen T.M."/>
            <person name="Zafar N."/>
            <person name="Zhou L."/>
            <person name="Radune D."/>
            <person name="Dimitrov G."/>
            <person name="Hance M."/>
            <person name="Tran K."/>
            <person name="Khouri H.M."/>
            <person name="Gill J."/>
            <person name="Utterback T.R."/>
            <person name="Feldblyum T.V."/>
            <person name="Wall J.D."/>
            <person name="Voordouw G."/>
            <person name="Fraser C.M."/>
        </authorList>
    </citation>
    <scope>NUCLEOTIDE SEQUENCE [LARGE SCALE GENOMIC DNA]</scope>
    <source>
        <strain>ATCC 29579 / DSM 644 / CCUG 34227 / NCIMB 8303 / VKM B-1760 / Hildenborough</strain>
    </source>
</reference>
<dbReference type="EC" id="6.3.2.9" evidence="1"/>
<dbReference type="EMBL" id="AE017285">
    <property type="protein sequence ID" value="AAS96978.1"/>
    <property type="molecule type" value="Genomic_DNA"/>
</dbReference>
<dbReference type="RefSeq" id="WP_010939776.1">
    <property type="nucleotide sequence ID" value="NC_002937.3"/>
</dbReference>
<dbReference type="RefSeq" id="YP_011718.1">
    <property type="nucleotide sequence ID" value="NC_002937.3"/>
</dbReference>
<dbReference type="SMR" id="Q728U6"/>
<dbReference type="STRING" id="882.DVU_2506"/>
<dbReference type="PaxDb" id="882-DVU_2506"/>
<dbReference type="EnsemblBacteria" id="AAS96978">
    <property type="protein sequence ID" value="AAS96978"/>
    <property type="gene ID" value="DVU_2506"/>
</dbReference>
<dbReference type="KEGG" id="dvu:DVU_2506"/>
<dbReference type="PATRIC" id="fig|882.5.peg.2266"/>
<dbReference type="eggNOG" id="COG0771">
    <property type="taxonomic scope" value="Bacteria"/>
</dbReference>
<dbReference type="HOGENOM" id="CLU_032540_0_0_7"/>
<dbReference type="OrthoDB" id="9809796at2"/>
<dbReference type="PhylomeDB" id="Q728U6"/>
<dbReference type="UniPathway" id="UPA00219"/>
<dbReference type="Proteomes" id="UP000002194">
    <property type="component" value="Chromosome"/>
</dbReference>
<dbReference type="GO" id="GO:0005737">
    <property type="term" value="C:cytoplasm"/>
    <property type="evidence" value="ECO:0007669"/>
    <property type="project" value="UniProtKB-SubCell"/>
</dbReference>
<dbReference type="GO" id="GO:0005524">
    <property type="term" value="F:ATP binding"/>
    <property type="evidence" value="ECO:0007669"/>
    <property type="project" value="UniProtKB-UniRule"/>
</dbReference>
<dbReference type="GO" id="GO:0008764">
    <property type="term" value="F:UDP-N-acetylmuramoylalanine-D-glutamate ligase activity"/>
    <property type="evidence" value="ECO:0007669"/>
    <property type="project" value="UniProtKB-UniRule"/>
</dbReference>
<dbReference type="GO" id="GO:0051301">
    <property type="term" value="P:cell division"/>
    <property type="evidence" value="ECO:0007669"/>
    <property type="project" value="UniProtKB-KW"/>
</dbReference>
<dbReference type="GO" id="GO:0071555">
    <property type="term" value="P:cell wall organization"/>
    <property type="evidence" value="ECO:0007669"/>
    <property type="project" value="UniProtKB-KW"/>
</dbReference>
<dbReference type="GO" id="GO:0009252">
    <property type="term" value="P:peptidoglycan biosynthetic process"/>
    <property type="evidence" value="ECO:0007669"/>
    <property type="project" value="UniProtKB-UniRule"/>
</dbReference>
<dbReference type="GO" id="GO:0008360">
    <property type="term" value="P:regulation of cell shape"/>
    <property type="evidence" value="ECO:0007669"/>
    <property type="project" value="UniProtKB-KW"/>
</dbReference>
<dbReference type="Gene3D" id="3.90.190.20">
    <property type="entry name" value="Mur ligase, C-terminal domain"/>
    <property type="match status" value="1"/>
</dbReference>
<dbReference type="Gene3D" id="3.40.1190.10">
    <property type="entry name" value="Mur-like, catalytic domain"/>
    <property type="match status" value="1"/>
</dbReference>
<dbReference type="Gene3D" id="3.40.50.720">
    <property type="entry name" value="NAD(P)-binding Rossmann-like Domain"/>
    <property type="match status" value="1"/>
</dbReference>
<dbReference type="HAMAP" id="MF_00639">
    <property type="entry name" value="MurD"/>
    <property type="match status" value="1"/>
</dbReference>
<dbReference type="InterPro" id="IPR036565">
    <property type="entry name" value="Mur-like_cat_sf"/>
</dbReference>
<dbReference type="InterPro" id="IPR004101">
    <property type="entry name" value="Mur_ligase_C"/>
</dbReference>
<dbReference type="InterPro" id="IPR036615">
    <property type="entry name" value="Mur_ligase_C_dom_sf"/>
</dbReference>
<dbReference type="InterPro" id="IPR013221">
    <property type="entry name" value="Mur_ligase_cen"/>
</dbReference>
<dbReference type="InterPro" id="IPR005762">
    <property type="entry name" value="MurD"/>
</dbReference>
<dbReference type="NCBIfam" id="TIGR01087">
    <property type="entry name" value="murD"/>
    <property type="match status" value="1"/>
</dbReference>
<dbReference type="PANTHER" id="PTHR43692">
    <property type="entry name" value="UDP-N-ACETYLMURAMOYLALANINE--D-GLUTAMATE LIGASE"/>
    <property type="match status" value="1"/>
</dbReference>
<dbReference type="PANTHER" id="PTHR43692:SF1">
    <property type="entry name" value="UDP-N-ACETYLMURAMOYLALANINE--D-GLUTAMATE LIGASE"/>
    <property type="match status" value="1"/>
</dbReference>
<dbReference type="Pfam" id="PF02875">
    <property type="entry name" value="Mur_ligase_C"/>
    <property type="match status" value="1"/>
</dbReference>
<dbReference type="Pfam" id="PF08245">
    <property type="entry name" value="Mur_ligase_M"/>
    <property type="match status" value="1"/>
</dbReference>
<dbReference type="Pfam" id="PF21799">
    <property type="entry name" value="MurD-like_N"/>
    <property type="match status" value="1"/>
</dbReference>
<dbReference type="SUPFAM" id="SSF51984">
    <property type="entry name" value="MurCD N-terminal domain"/>
    <property type="match status" value="1"/>
</dbReference>
<dbReference type="SUPFAM" id="SSF53623">
    <property type="entry name" value="MurD-like peptide ligases, catalytic domain"/>
    <property type="match status" value="1"/>
</dbReference>
<dbReference type="SUPFAM" id="SSF53244">
    <property type="entry name" value="MurD-like peptide ligases, peptide-binding domain"/>
    <property type="match status" value="1"/>
</dbReference>